<gene>
    <name evidence="1" type="primary">ccmE</name>
    <name evidence="1" type="synonym">cycJ</name>
    <name type="ordered locus">CPS_1030</name>
</gene>
<organism>
    <name type="scientific">Colwellia psychrerythraea (strain 34H / ATCC BAA-681)</name>
    <name type="common">Vibrio psychroerythus</name>
    <dbReference type="NCBI Taxonomy" id="167879"/>
    <lineage>
        <taxon>Bacteria</taxon>
        <taxon>Pseudomonadati</taxon>
        <taxon>Pseudomonadota</taxon>
        <taxon>Gammaproteobacteria</taxon>
        <taxon>Alteromonadales</taxon>
        <taxon>Colwelliaceae</taxon>
        <taxon>Colwellia</taxon>
    </lineage>
</organism>
<reference key="1">
    <citation type="journal article" date="2005" name="Proc. Natl. Acad. Sci. U.S.A.">
        <title>The psychrophilic lifestyle as revealed by the genome sequence of Colwellia psychrerythraea 34H through genomic and proteomic analyses.</title>
        <authorList>
            <person name="Methe B.A."/>
            <person name="Nelson K.E."/>
            <person name="Deming J.W."/>
            <person name="Momen B."/>
            <person name="Melamud E."/>
            <person name="Zhang X."/>
            <person name="Moult J."/>
            <person name="Madupu R."/>
            <person name="Nelson W.C."/>
            <person name="Dodson R.J."/>
            <person name="Brinkac L.M."/>
            <person name="Daugherty S.C."/>
            <person name="Durkin A.S."/>
            <person name="DeBoy R.T."/>
            <person name="Kolonay J.F."/>
            <person name="Sullivan S.A."/>
            <person name="Zhou L."/>
            <person name="Davidsen T.M."/>
            <person name="Wu M."/>
            <person name="Huston A.L."/>
            <person name="Lewis M."/>
            <person name="Weaver B."/>
            <person name="Weidman J.F."/>
            <person name="Khouri H."/>
            <person name="Utterback T.R."/>
            <person name="Feldblyum T.V."/>
            <person name="Fraser C.M."/>
        </authorList>
    </citation>
    <scope>NUCLEOTIDE SEQUENCE [LARGE SCALE GENOMIC DNA]</scope>
    <source>
        <strain>34H / ATCC BAA-681</strain>
    </source>
</reference>
<name>CCME_COLP3</name>
<accession>Q487I6</accession>
<sequence length="178" mass="19458">MNPRRKKRLAIVGSILIGIGVVSGLVLYALSQNIDLFFTPSEITQGKKETGLKPSLGQRIRIGGLVVPGSVKRDPENLKVSFRLSDMAMPIVFKDSDPMVTVYYEGILPDLFREGQGIVANGTLTEHPPTGLSIEASEVLAKHDENYMPAELAEAAGQKHDKATYSDKQLESKKTNSY</sequence>
<keyword id="KW-0997">Cell inner membrane</keyword>
<keyword id="KW-1003">Cell membrane</keyword>
<keyword id="KW-0201">Cytochrome c-type biogenesis</keyword>
<keyword id="KW-0349">Heme</keyword>
<keyword id="KW-0408">Iron</keyword>
<keyword id="KW-0472">Membrane</keyword>
<keyword id="KW-0479">Metal-binding</keyword>
<keyword id="KW-0735">Signal-anchor</keyword>
<keyword id="KW-0812">Transmembrane</keyword>
<keyword id="KW-1133">Transmembrane helix</keyword>
<evidence type="ECO:0000255" key="1">
    <source>
        <dbReference type="HAMAP-Rule" id="MF_01959"/>
    </source>
</evidence>
<evidence type="ECO:0000256" key="2">
    <source>
        <dbReference type="SAM" id="MobiDB-lite"/>
    </source>
</evidence>
<comment type="function">
    <text evidence="1">Heme chaperone required for the biogenesis of c-type cytochromes. Transiently binds heme delivered by CcmC and transfers the heme to apo-cytochromes in a process facilitated by CcmF and CcmH.</text>
</comment>
<comment type="subcellular location">
    <subcellularLocation>
        <location evidence="1">Cell inner membrane</location>
        <topology evidence="1">Single-pass type II membrane protein</topology>
        <orientation evidence="1">Periplasmic side</orientation>
    </subcellularLocation>
</comment>
<comment type="similarity">
    <text evidence="1">Belongs to the CcmE/CycJ family.</text>
</comment>
<protein>
    <recommendedName>
        <fullName evidence="1">Cytochrome c-type biogenesis protein CcmE</fullName>
    </recommendedName>
    <alternativeName>
        <fullName evidence="1">Cytochrome c maturation protein E</fullName>
    </alternativeName>
    <alternativeName>
        <fullName evidence="1">Heme chaperone CcmE</fullName>
    </alternativeName>
</protein>
<feature type="chain" id="PRO_0000238803" description="Cytochrome c-type biogenesis protein CcmE">
    <location>
        <begin position="1"/>
        <end position="178"/>
    </location>
</feature>
<feature type="topological domain" description="Cytoplasmic" evidence="1">
    <location>
        <begin position="1"/>
        <end position="8"/>
    </location>
</feature>
<feature type="transmembrane region" description="Helical; Signal-anchor for type II membrane protein" evidence="1">
    <location>
        <begin position="9"/>
        <end position="29"/>
    </location>
</feature>
<feature type="topological domain" description="Periplasmic" evidence="1">
    <location>
        <begin position="30"/>
        <end position="178"/>
    </location>
</feature>
<feature type="region of interest" description="Disordered" evidence="2">
    <location>
        <begin position="154"/>
        <end position="178"/>
    </location>
</feature>
<feature type="compositionally biased region" description="Basic and acidic residues" evidence="2">
    <location>
        <begin position="157"/>
        <end position="178"/>
    </location>
</feature>
<feature type="binding site" description="covalent" evidence="1">
    <location>
        <position position="143"/>
    </location>
    <ligand>
        <name>heme</name>
        <dbReference type="ChEBI" id="CHEBI:30413"/>
    </ligand>
</feature>
<feature type="binding site" description="axial binding residue" evidence="1">
    <location>
        <position position="147"/>
    </location>
    <ligand>
        <name>heme</name>
        <dbReference type="ChEBI" id="CHEBI:30413"/>
    </ligand>
    <ligandPart>
        <name>Fe</name>
        <dbReference type="ChEBI" id="CHEBI:18248"/>
    </ligandPart>
</feature>
<dbReference type="EMBL" id="CP000083">
    <property type="protein sequence ID" value="AAZ25135.1"/>
    <property type="molecule type" value="Genomic_DNA"/>
</dbReference>
<dbReference type="RefSeq" id="WP_011041873.1">
    <property type="nucleotide sequence ID" value="NC_003910.7"/>
</dbReference>
<dbReference type="SMR" id="Q487I6"/>
<dbReference type="STRING" id="167879.CPS_1030"/>
<dbReference type="KEGG" id="cps:CPS_1030"/>
<dbReference type="eggNOG" id="COG2332">
    <property type="taxonomic scope" value="Bacteria"/>
</dbReference>
<dbReference type="HOGENOM" id="CLU_079503_1_0_6"/>
<dbReference type="Proteomes" id="UP000000547">
    <property type="component" value="Chromosome"/>
</dbReference>
<dbReference type="GO" id="GO:0005886">
    <property type="term" value="C:plasma membrane"/>
    <property type="evidence" value="ECO:0007669"/>
    <property type="project" value="UniProtKB-SubCell"/>
</dbReference>
<dbReference type="GO" id="GO:0020037">
    <property type="term" value="F:heme binding"/>
    <property type="evidence" value="ECO:0007669"/>
    <property type="project" value="InterPro"/>
</dbReference>
<dbReference type="GO" id="GO:0046872">
    <property type="term" value="F:metal ion binding"/>
    <property type="evidence" value="ECO:0007669"/>
    <property type="project" value="UniProtKB-KW"/>
</dbReference>
<dbReference type="GO" id="GO:0017004">
    <property type="term" value="P:cytochrome complex assembly"/>
    <property type="evidence" value="ECO:0007669"/>
    <property type="project" value="UniProtKB-KW"/>
</dbReference>
<dbReference type="FunFam" id="2.40.50.140:FF:000104">
    <property type="entry name" value="Cytochrome c-type biogenesis protein CcmE"/>
    <property type="match status" value="1"/>
</dbReference>
<dbReference type="Gene3D" id="2.40.50.140">
    <property type="entry name" value="Nucleic acid-binding proteins"/>
    <property type="match status" value="1"/>
</dbReference>
<dbReference type="HAMAP" id="MF_01959">
    <property type="entry name" value="CcmE"/>
    <property type="match status" value="1"/>
</dbReference>
<dbReference type="InterPro" id="IPR004329">
    <property type="entry name" value="CcmE"/>
</dbReference>
<dbReference type="InterPro" id="IPR036127">
    <property type="entry name" value="CcmE-like_sf"/>
</dbReference>
<dbReference type="InterPro" id="IPR012340">
    <property type="entry name" value="NA-bd_OB-fold"/>
</dbReference>
<dbReference type="NCBIfam" id="NF009638">
    <property type="entry name" value="PRK13165.1"/>
    <property type="match status" value="1"/>
</dbReference>
<dbReference type="PANTHER" id="PTHR34128">
    <property type="entry name" value="CYTOCHROME C-TYPE BIOGENESIS PROTEIN CCME HOMOLOG, MITOCHONDRIAL"/>
    <property type="match status" value="1"/>
</dbReference>
<dbReference type="PANTHER" id="PTHR34128:SF2">
    <property type="entry name" value="CYTOCHROME C-TYPE BIOGENESIS PROTEIN CCME HOMOLOG, MITOCHONDRIAL"/>
    <property type="match status" value="1"/>
</dbReference>
<dbReference type="Pfam" id="PF03100">
    <property type="entry name" value="CcmE"/>
    <property type="match status" value="1"/>
</dbReference>
<dbReference type="SUPFAM" id="SSF82093">
    <property type="entry name" value="Heme chaperone CcmE"/>
    <property type="match status" value="1"/>
</dbReference>
<proteinExistence type="inferred from homology"/>